<keyword id="KW-0963">Cytoplasm</keyword>
<keyword id="KW-0251">Elongation factor</keyword>
<keyword id="KW-0342">GTP-binding</keyword>
<keyword id="KW-0378">Hydrolase</keyword>
<keyword id="KW-0460">Magnesium</keyword>
<keyword id="KW-0479">Metal-binding</keyword>
<keyword id="KW-0547">Nucleotide-binding</keyword>
<keyword id="KW-0648">Protein biosynthesis</keyword>
<comment type="function">
    <text evidence="2">GTP hydrolase that promotes the GTP-dependent binding of aminoacyl-tRNA to the A-site of ribosomes during protein biosynthesis.</text>
</comment>
<comment type="catalytic activity">
    <reaction evidence="2">
        <text>GTP + H2O = GDP + phosphate + H(+)</text>
        <dbReference type="Rhea" id="RHEA:19669"/>
        <dbReference type="ChEBI" id="CHEBI:15377"/>
        <dbReference type="ChEBI" id="CHEBI:15378"/>
        <dbReference type="ChEBI" id="CHEBI:37565"/>
        <dbReference type="ChEBI" id="CHEBI:43474"/>
        <dbReference type="ChEBI" id="CHEBI:58189"/>
        <dbReference type="EC" id="3.6.5.3"/>
    </reaction>
    <physiologicalReaction direction="left-to-right" evidence="2">
        <dbReference type="Rhea" id="RHEA:19670"/>
    </physiologicalReaction>
</comment>
<comment type="subunit">
    <text evidence="2">Monomer.</text>
</comment>
<comment type="subcellular location">
    <subcellularLocation>
        <location evidence="2">Cytoplasm</location>
    </subcellularLocation>
</comment>
<comment type="similarity">
    <text evidence="2">Belongs to the TRAFAC class translation factor GTPase superfamily. Classic translation factor GTPase family. EF-Tu/EF-1A subfamily.</text>
</comment>
<protein>
    <recommendedName>
        <fullName evidence="2">Elongation factor Tu</fullName>
        <shortName evidence="2">EF-Tu</shortName>
        <ecNumber evidence="2">3.6.5.3</ecNumber>
    </recommendedName>
</protein>
<dbReference type="EC" id="3.6.5.3" evidence="2"/>
<dbReference type="EMBL" id="CP000083">
    <property type="protein sequence ID" value="AAZ27365.1"/>
    <property type="molecule type" value="Genomic_DNA"/>
</dbReference>
<dbReference type="EMBL" id="CP000083">
    <property type="protein sequence ID" value="AAZ28476.1"/>
    <property type="molecule type" value="Genomic_DNA"/>
</dbReference>
<dbReference type="SMR" id="Q47UU9"/>
<dbReference type="STRING" id="167879.CPS_4764"/>
<dbReference type="KEGG" id="cps:CPS_4764"/>
<dbReference type="KEGG" id="cps:CPS_4780"/>
<dbReference type="eggNOG" id="COG0050">
    <property type="taxonomic scope" value="Bacteria"/>
</dbReference>
<dbReference type="HOGENOM" id="CLU_007265_0_0_6"/>
<dbReference type="Proteomes" id="UP000000547">
    <property type="component" value="Chromosome"/>
</dbReference>
<dbReference type="GO" id="GO:0005829">
    <property type="term" value="C:cytosol"/>
    <property type="evidence" value="ECO:0007669"/>
    <property type="project" value="TreeGrafter"/>
</dbReference>
<dbReference type="GO" id="GO:0005525">
    <property type="term" value="F:GTP binding"/>
    <property type="evidence" value="ECO:0007669"/>
    <property type="project" value="UniProtKB-UniRule"/>
</dbReference>
<dbReference type="GO" id="GO:0003924">
    <property type="term" value="F:GTPase activity"/>
    <property type="evidence" value="ECO:0007669"/>
    <property type="project" value="InterPro"/>
</dbReference>
<dbReference type="GO" id="GO:0097216">
    <property type="term" value="F:guanosine tetraphosphate binding"/>
    <property type="evidence" value="ECO:0007669"/>
    <property type="project" value="UniProtKB-ARBA"/>
</dbReference>
<dbReference type="GO" id="GO:0003746">
    <property type="term" value="F:translation elongation factor activity"/>
    <property type="evidence" value="ECO:0007669"/>
    <property type="project" value="UniProtKB-UniRule"/>
</dbReference>
<dbReference type="CDD" id="cd01884">
    <property type="entry name" value="EF_Tu"/>
    <property type="match status" value="1"/>
</dbReference>
<dbReference type="CDD" id="cd03697">
    <property type="entry name" value="EFTU_II"/>
    <property type="match status" value="1"/>
</dbReference>
<dbReference type="CDD" id="cd03707">
    <property type="entry name" value="EFTU_III"/>
    <property type="match status" value="1"/>
</dbReference>
<dbReference type="FunFam" id="2.40.30.10:FF:000001">
    <property type="entry name" value="Elongation factor Tu"/>
    <property type="match status" value="1"/>
</dbReference>
<dbReference type="FunFam" id="3.40.50.300:FF:000003">
    <property type="entry name" value="Elongation factor Tu"/>
    <property type="match status" value="1"/>
</dbReference>
<dbReference type="Gene3D" id="3.40.50.300">
    <property type="entry name" value="P-loop containing nucleotide triphosphate hydrolases"/>
    <property type="match status" value="1"/>
</dbReference>
<dbReference type="Gene3D" id="2.40.30.10">
    <property type="entry name" value="Translation factors"/>
    <property type="match status" value="2"/>
</dbReference>
<dbReference type="HAMAP" id="MF_00118_B">
    <property type="entry name" value="EF_Tu_B"/>
    <property type="match status" value="1"/>
</dbReference>
<dbReference type="InterPro" id="IPR041709">
    <property type="entry name" value="EF-Tu_GTP-bd"/>
</dbReference>
<dbReference type="InterPro" id="IPR050055">
    <property type="entry name" value="EF-Tu_GTPase"/>
</dbReference>
<dbReference type="InterPro" id="IPR004161">
    <property type="entry name" value="EFTu-like_2"/>
</dbReference>
<dbReference type="InterPro" id="IPR033720">
    <property type="entry name" value="EFTU_2"/>
</dbReference>
<dbReference type="InterPro" id="IPR031157">
    <property type="entry name" value="G_TR_CS"/>
</dbReference>
<dbReference type="InterPro" id="IPR027417">
    <property type="entry name" value="P-loop_NTPase"/>
</dbReference>
<dbReference type="InterPro" id="IPR005225">
    <property type="entry name" value="Small_GTP-bd"/>
</dbReference>
<dbReference type="InterPro" id="IPR000795">
    <property type="entry name" value="T_Tr_GTP-bd_dom"/>
</dbReference>
<dbReference type="InterPro" id="IPR009000">
    <property type="entry name" value="Transl_B-barrel_sf"/>
</dbReference>
<dbReference type="InterPro" id="IPR009001">
    <property type="entry name" value="Transl_elong_EF1A/Init_IF2_C"/>
</dbReference>
<dbReference type="InterPro" id="IPR004541">
    <property type="entry name" value="Transl_elong_EFTu/EF1A_bac/org"/>
</dbReference>
<dbReference type="InterPro" id="IPR004160">
    <property type="entry name" value="Transl_elong_EFTu/EF1A_C"/>
</dbReference>
<dbReference type="NCBIfam" id="TIGR00485">
    <property type="entry name" value="EF-Tu"/>
    <property type="match status" value="1"/>
</dbReference>
<dbReference type="NCBIfam" id="NF000766">
    <property type="entry name" value="PRK00049.1"/>
    <property type="match status" value="1"/>
</dbReference>
<dbReference type="NCBIfam" id="NF009372">
    <property type="entry name" value="PRK12735.1"/>
    <property type="match status" value="1"/>
</dbReference>
<dbReference type="NCBIfam" id="NF009373">
    <property type="entry name" value="PRK12736.1"/>
    <property type="match status" value="1"/>
</dbReference>
<dbReference type="NCBIfam" id="TIGR00231">
    <property type="entry name" value="small_GTP"/>
    <property type="match status" value="1"/>
</dbReference>
<dbReference type="PANTHER" id="PTHR43721:SF22">
    <property type="entry name" value="ELONGATION FACTOR TU, MITOCHONDRIAL"/>
    <property type="match status" value="1"/>
</dbReference>
<dbReference type="PANTHER" id="PTHR43721">
    <property type="entry name" value="ELONGATION FACTOR TU-RELATED"/>
    <property type="match status" value="1"/>
</dbReference>
<dbReference type="Pfam" id="PF00009">
    <property type="entry name" value="GTP_EFTU"/>
    <property type="match status" value="1"/>
</dbReference>
<dbReference type="Pfam" id="PF03144">
    <property type="entry name" value="GTP_EFTU_D2"/>
    <property type="match status" value="1"/>
</dbReference>
<dbReference type="Pfam" id="PF03143">
    <property type="entry name" value="GTP_EFTU_D3"/>
    <property type="match status" value="1"/>
</dbReference>
<dbReference type="PRINTS" id="PR00315">
    <property type="entry name" value="ELONGATNFCT"/>
</dbReference>
<dbReference type="SUPFAM" id="SSF50465">
    <property type="entry name" value="EF-Tu/eEF-1alpha/eIF2-gamma C-terminal domain"/>
    <property type="match status" value="1"/>
</dbReference>
<dbReference type="SUPFAM" id="SSF52540">
    <property type="entry name" value="P-loop containing nucleoside triphosphate hydrolases"/>
    <property type="match status" value="1"/>
</dbReference>
<dbReference type="SUPFAM" id="SSF50447">
    <property type="entry name" value="Translation proteins"/>
    <property type="match status" value="1"/>
</dbReference>
<dbReference type="PROSITE" id="PS00301">
    <property type="entry name" value="G_TR_1"/>
    <property type="match status" value="1"/>
</dbReference>
<dbReference type="PROSITE" id="PS51722">
    <property type="entry name" value="G_TR_2"/>
    <property type="match status" value="1"/>
</dbReference>
<name>EFTU_COLP3</name>
<evidence type="ECO:0000250" key="1"/>
<evidence type="ECO:0000255" key="2">
    <source>
        <dbReference type="HAMAP-Rule" id="MF_00118"/>
    </source>
</evidence>
<proteinExistence type="inferred from homology"/>
<reference key="1">
    <citation type="journal article" date="2005" name="Proc. Natl. Acad. Sci. U.S.A.">
        <title>The psychrophilic lifestyle as revealed by the genome sequence of Colwellia psychrerythraea 34H through genomic and proteomic analyses.</title>
        <authorList>
            <person name="Methe B.A."/>
            <person name="Nelson K.E."/>
            <person name="Deming J.W."/>
            <person name="Momen B."/>
            <person name="Melamud E."/>
            <person name="Zhang X."/>
            <person name="Moult J."/>
            <person name="Madupu R."/>
            <person name="Nelson W.C."/>
            <person name="Dodson R.J."/>
            <person name="Brinkac L.M."/>
            <person name="Daugherty S.C."/>
            <person name="Durkin A.S."/>
            <person name="DeBoy R.T."/>
            <person name="Kolonay J.F."/>
            <person name="Sullivan S.A."/>
            <person name="Zhou L."/>
            <person name="Davidsen T.M."/>
            <person name="Wu M."/>
            <person name="Huston A.L."/>
            <person name="Lewis M."/>
            <person name="Weaver B."/>
            <person name="Weidman J.F."/>
            <person name="Khouri H."/>
            <person name="Utterback T.R."/>
            <person name="Feldblyum T.V."/>
            <person name="Fraser C.M."/>
        </authorList>
    </citation>
    <scope>NUCLEOTIDE SEQUENCE [LARGE SCALE GENOMIC DNA]</scope>
    <source>
        <strain>34H / ATCC BAA-681</strain>
    </source>
</reference>
<feature type="chain" id="PRO_0000337366" description="Elongation factor Tu">
    <location>
        <begin position="1"/>
        <end position="394"/>
    </location>
</feature>
<feature type="domain" description="tr-type G">
    <location>
        <begin position="10"/>
        <end position="204"/>
    </location>
</feature>
<feature type="region of interest" description="G1" evidence="1">
    <location>
        <begin position="19"/>
        <end position="26"/>
    </location>
</feature>
<feature type="region of interest" description="G2" evidence="1">
    <location>
        <begin position="60"/>
        <end position="64"/>
    </location>
</feature>
<feature type="region of interest" description="G3" evidence="1">
    <location>
        <begin position="81"/>
        <end position="84"/>
    </location>
</feature>
<feature type="region of interest" description="G4" evidence="1">
    <location>
        <begin position="136"/>
        <end position="139"/>
    </location>
</feature>
<feature type="region of interest" description="G5" evidence="1">
    <location>
        <begin position="174"/>
        <end position="176"/>
    </location>
</feature>
<feature type="binding site" evidence="2">
    <location>
        <begin position="19"/>
        <end position="26"/>
    </location>
    <ligand>
        <name>GTP</name>
        <dbReference type="ChEBI" id="CHEBI:37565"/>
    </ligand>
</feature>
<feature type="binding site" evidence="2">
    <location>
        <position position="26"/>
    </location>
    <ligand>
        <name>Mg(2+)</name>
        <dbReference type="ChEBI" id="CHEBI:18420"/>
    </ligand>
</feature>
<feature type="binding site" evidence="2">
    <location>
        <begin position="81"/>
        <end position="85"/>
    </location>
    <ligand>
        <name>GTP</name>
        <dbReference type="ChEBI" id="CHEBI:37565"/>
    </ligand>
</feature>
<feature type="binding site" evidence="2">
    <location>
        <begin position="136"/>
        <end position="139"/>
    </location>
    <ligand>
        <name>GTP</name>
        <dbReference type="ChEBI" id="CHEBI:37565"/>
    </ligand>
</feature>
<accession>Q47UU9</accession>
<gene>
    <name evidence="2" type="primary">tuf1</name>
    <name type="ordered locus">CPS_4764</name>
</gene>
<gene>
    <name evidence="2" type="primary">tuf2</name>
    <name type="ordered locus">CPS_4780</name>
</gene>
<sequence length="394" mass="43217">MAKEKFERNKPHVNVGTIGHVDHGKTTLTAAISAVLTKVHGGEVKDFAQIDNAPEERERGITINTSHIEYDTEARHYAHVDCPGHADYIKNMITGAAQMDGAILVVAATDGPMPQTREHILLSRQVGVPFIIVFMNKCDVVDDEELLELVEMEVRELLSEYDFPGDDLPVIQGSALGALQGDEAWEAKIIELADALDTYIPEPERAIDGAFIMPIEDVFSISGRGTVVTGRVERGIIKIGEEVEVVGIRDTQKSTCTGVEMFRKLLDEGRAGENCGVLLRGLKREDVERGQVLCAPGSILPHTKFESEVYVLSKDEGGRHTPFFKGYRPQFYFRTTDITGAVELPEGVEMVMPGDNLKFVVELINPVAMDEGLRFAIREGGRTVGAGVVSKIMA</sequence>
<organism>
    <name type="scientific">Colwellia psychrerythraea (strain 34H / ATCC BAA-681)</name>
    <name type="common">Vibrio psychroerythus</name>
    <dbReference type="NCBI Taxonomy" id="167879"/>
    <lineage>
        <taxon>Bacteria</taxon>
        <taxon>Pseudomonadati</taxon>
        <taxon>Pseudomonadota</taxon>
        <taxon>Gammaproteobacteria</taxon>
        <taxon>Alteromonadales</taxon>
        <taxon>Colwelliaceae</taxon>
        <taxon>Colwellia</taxon>
    </lineage>
</organism>